<name>RFC2_BOVIN</name>
<protein>
    <recommendedName>
        <fullName>Replication factor C subunit 2</fullName>
    </recommendedName>
    <alternativeName>
        <fullName>Activator 1 subunit 2</fullName>
    </alternativeName>
</protein>
<organism>
    <name type="scientific">Bos taurus</name>
    <name type="common">Bovine</name>
    <dbReference type="NCBI Taxonomy" id="9913"/>
    <lineage>
        <taxon>Eukaryota</taxon>
        <taxon>Metazoa</taxon>
        <taxon>Chordata</taxon>
        <taxon>Craniata</taxon>
        <taxon>Vertebrata</taxon>
        <taxon>Euteleostomi</taxon>
        <taxon>Mammalia</taxon>
        <taxon>Eutheria</taxon>
        <taxon>Laurasiatheria</taxon>
        <taxon>Artiodactyla</taxon>
        <taxon>Ruminantia</taxon>
        <taxon>Pecora</taxon>
        <taxon>Bovidae</taxon>
        <taxon>Bovinae</taxon>
        <taxon>Bos</taxon>
    </lineage>
</organism>
<proteinExistence type="evidence at transcript level"/>
<keyword id="KW-0007">Acetylation</keyword>
<keyword id="KW-0067">ATP-binding</keyword>
<keyword id="KW-0235">DNA replication</keyword>
<keyword id="KW-0547">Nucleotide-binding</keyword>
<keyword id="KW-0539">Nucleus</keyword>
<keyword id="KW-0597">Phosphoprotein</keyword>
<keyword id="KW-1185">Reference proteome</keyword>
<reference key="1">
    <citation type="submission" date="2006-08" db="EMBL/GenBank/DDBJ databases">
        <authorList>
            <consortium name="NIH - Mammalian Gene Collection (MGC) project"/>
        </authorList>
    </citation>
    <scope>NUCLEOTIDE SEQUENCE [LARGE SCALE MRNA]</scope>
    <source>
        <strain>Hereford</strain>
        <tissue>Brain cortex</tissue>
    </source>
</reference>
<dbReference type="EMBL" id="BC122635">
    <property type="protein sequence ID" value="AAI22636.1"/>
    <property type="molecule type" value="mRNA"/>
</dbReference>
<dbReference type="RefSeq" id="NP_001074372.1">
    <property type="nucleotide sequence ID" value="NM_001080903.1"/>
</dbReference>
<dbReference type="SMR" id="Q05B83"/>
<dbReference type="BioGRID" id="165290">
    <property type="interactions" value="1"/>
</dbReference>
<dbReference type="CORUM" id="Q05B83"/>
<dbReference type="FunCoup" id="Q05B83">
    <property type="interactions" value="3083"/>
</dbReference>
<dbReference type="STRING" id="9913.ENSBTAP00000024740"/>
<dbReference type="PaxDb" id="9913-ENSBTAP00000024740"/>
<dbReference type="Ensembl" id="ENSBTAT00000024740.6">
    <property type="protein sequence ID" value="ENSBTAP00000024740.5"/>
    <property type="gene ID" value="ENSBTAG00000018589.7"/>
</dbReference>
<dbReference type="GeneID" id="508652"/>
<dbReference type="KEGG" id="bta:508652"/>
<dbReference type="CTD" id="5982"/>
<dbReference type="VEuPathDB" id="HostDB:ENSBTAG00000018589"/>
<dbReference type="VGNC" id="VGNC:33886">
    <property type="gene designation" value="RFC2"/>
</dbReference>
<dbReference type="eggNOG" id="KOG0991">
    <property type="taxonomic scope" value="Eukaryota"/>
</dbReference>
<dbReference type="GeneTree" id="ENSGT00550000075050"/>
<dbReference type="HOGENOM" id="CLU_042324_0_1_1"/>
<dbReference type="InParanoid" id="Q05B83"/>
<dbReference type="OMA" id="SCNYSSQ"/>
<dbReference type="OrthoDB" id="4199794at2759"/>
<dbReference type="TreeFam" id="TF300585"/>
<dbReference type="Reactome" id="R-BTA-110312">
    <property type="pathway name" value="Translesion synthesis by REV1"/>
</dbReference>
<dbReference type="Reactome" id="R-BTA-110314">
    <property type="pathway name" value="Recognition of DNA damage by PCNA-containing replication complex"/>
</dbReference>
<dbReference type="Reactome" id="R-BTA-110320">
    <property type="pathway name" value="Translesion Synthesis by POLH"/>
</dbReference>
<dbReference type="Reactome" id="R-BTA-174411">
    <property type="pathway name" value="Polymerase switching on the C-strand of the telomere"/>
</dbReference>
<dbReference type="Reactome" id="R-BTA-176187">
    <property type="pathway name" value="Activation of ATR in response to replication stress"/>
</dbReference>
<dbReference type="Reactome" id="R-BTA-5651801">
    <property type="pathway name" value="PCNA-Dependent Long Patch Base Excision Repair"/>
</dbReference>
<dbReference type="Reactome" id="R-BTA-5655862">
    <property type="pathway name" value="Translesion synthesis by POLK"/>
</dbReference>
<dbReference type="Reactome" id="R-BTA-5656121">
    <property type="pathway name" value="Translesion synthesis by POLI"/>
</dbReference>
<dbReference type="Reactome" id="R-BTA-5656169">
    <property type="pathway name" value="Termination of translesion DNA synthesis"/>
</dbReference>
<dbReference type="Reactome" id="R-BTA-5685938">
    <property type="pathway name" value="HDR through Single Strand Annealing (SSA)"/>
</dbReference>
<dbReference type="Reactome" id="R-BTA-5685942">
    <property type="pathway name" value="HDR through Homologous Recombination (HRR)"/>
</dbReference>
<dbReference type="Reactome" id="R-BTA-5693607">
    <property type="pathway name" value="Processing of DNA double-strand break ends"/>
</dbReference>
<dbReference type="Reactome" id="R-BTA-5696397">
    <property type="pathway name" value="Gap-filling DNA repair synthesis and ligation in GG-NER"/>
</dbReference>
<dbReference type="Reactome" id="R-BTA-5696400">
    <property type="pathway name" value="Dual Incision in GG-NER"/>
</dbReference>
<dbReference type="Reactome" id="R-BTA-6782135">
    <property type="pathway name" value="Dual incision in TC-NER"/>
</dbReference>
<dbReference type="Reactome" id="R-BTA-6782210">
    <property type="pathway name" value="Gap-filling DNA repair synthesis and ligation in TC-NER"/>
</dbReference>
<dbReference type="Reactome" id="R-BTA-6804756">
    <property type="pathway name" value="Regulation of TP53 Activity through Phosphorylation"/>
</dbReference>
<dbReference type="Reactome" id="R-BTA-69091">
    <property type="pathway name" value="Polymerase switching"/>
</dbReference>
<dbReference type="Reactome" id="R-BTA-69473">
    <property type="pathway name" value="G2/M DNA damage checkpoint"/>
</dbReference>
<dbReference type="Proteomes" id="UP000009136">
    <property type="component" value="Chromosome 25"/>
</dbReference>
<dbReference type="Bgee" id="ENSBTAG00000018589">
    <property type="expression patterns" value="Expressed in diaphragm and 105 other cell types or tissues"/>
</dbReference>
<dbReference type="GO" id="GO:0031390">
    <property type="term" value="C:Ctf18 RFC-like complex"/>
    <property type="evidence" value="ECO:0000250"/>
    <property type="project" value="UniProtKB"/>
</dbReference>
<dbReference type="GO" id="GO:0005663">
    <property type="term" value="C:DNA replication factor C complex"/>
    <property type="evidence" value="ECO:0000318"/>
    <property type="project" value="GO_Central"/>
</dbReference>
<dbReference type="GO" id="GO:0005634">
    <property type="term" value="C:nucleus"/>
    <property type="evidence" value="ECO:0000318"/>
    <property type="project" value="GO_Central"/>
</dbReference>
<dbReference type="GO" id="GO:0005524">
    <property type="term" value="F:ATP binding"/>
    <property type="evidence" value="ECO:0007669"/>
    <property type="project" value="UniProtKB-KW"/>
</dbReference>
<dbReference type="GO" id="GO:0016887">
    <property type="term" value="F:ATP hydrolysis activity"/>
    <property type="evidence" value="ECO:0007669"/>
    <property type="project" value="InterPro"/>
</dbReference>
<dbReference type="GO" id="GO:0003677">
    <property type="term" value="F:DNA binding"/>
    <property type="evidence" value="ECO:0007669"/>
    <property type="project" value="InterPro"/>
</dbReference>
<dbReference type="GO" id="GO:0006281">
    <property type="term" value="P:DNA repair"/>
    <property type="evidence" value="ECO:0000318"/>
    <property type="project" value="GO_Central"/>
</dbReference>
<dbReference type="GO" id="GO:0006261">
    <property type="term" value="P:DNA-templated DNA replication"/>
    <property type="evidence" value="ECO:0000318"/>
    <property type="project" value="GO_Central"/>
</dbReference>
<dbReference type="GO" id="GO:1900264">
    <property type="term" value="P:positive regulation of DNA-directed DNA polymerase activity"/>
    <property type="evidence" value="ECO:0000250"/>
    <property type="project" value="UniProtKB"/>
</dbReference>
<dbReference type="CDD" id="cd00009">
    <property type="entry name" value="AAA"/>
    <property type="match status" value="1"/>
</dbReference>
<dbReference type="CDD" id="cd18140">
    <property type="entry name" value="HLD_clamp_RFC"/>
    <property type="match status" value="1"/>
</dbReference>
<dbReference type="FunFam" id="1.20.272.10:FF:000006">
    <property type="entry name" value="Replication factor C subunit 2"/>
    <property type="match status" value="1"/>
</dbReference>
<dbReference type="FunFam" id="1.10.8.60:FF:000012">
    <property type="entry name" value="Replication factor C subunit 4"/>
    <property type="match status" value="1"/>
</dbReference>
<dbReference type="FunFam" id="3.40.50.300:FF:000107">
    <property type="entry name" value="Replication factor C subunit 4"/>
    <property type="match status" value="1"/>
</dbReference>
<dbReference type="Gene3D" id="1.10.8.60">
    <property type="match status" value="1"/>
</dbReference>
<dbReference type="Gene3D" id="1.20.272.10">
    <property type="match status" value="1"/>
</dbReference>
<dbReference type="Gene3D" id="3.40.50.300">
    <property type="entry name" value="P-loop containing nucleotide triphosphate hydrolases"/>
    <property type="match status" value="1"/>
</dbReference>
<dbReference type="InterPro" id="IPR003593">
    <property type="entry name" value="AAA+_ATPase"/>
</dbReference>
<dbReference type="InterPro" id="IPR003959">
    <property type="entry name" value="ATPase_AAA_core"/>
</dbReference>
<dbReference type="InterPro" id="IPR008921">
    <property type="entry name" value="DNA_pol3_clamp-load_cplx_C"/>
</dbReference>
<dbReference type="InterPro" id="IPR050238">
    <property type="entry name" value="DNA_Rep/Repair_Clamp_Loader"/>
</dbReference>
<dbReference type="InterPro" id="IPR027417">
    <property type="entry name" value="P-loop_NTPase"/>
</dbReference>
<dbReference type="InterPro" id="IPR013748">
    <property type="entry name" value="Rep_factorC_C"/>
</dbReference>
<dbReference type="InterPro" id="IPR047854">
    <property type="entry name" value="RFC_lid"/>
</dbReference>
<dbReference type="NCBIfam" id="NF001679">
    <property type="entry name" value="PRK00440.1"/>
    <property type="match status" value="1"/>
</dbReference>
<dbReference type="PANTHER" id="PTHR11669">
    <property type="entry name" value="REPLICATION FACTOR C / DNA POLYMERASE III GAMMA-TAU SUBUNIT"/>
    <property type="match status" value="1"/>
</dbReference>
<dbReference type="PANTHER" id="PTHR11669:SF5">
    <property type="entry name" value="REPLICATION FACTOR C SUBUNIT 2"/>
    <property type="match status" value="1"/>
</dbReference>
<dbReference type="Pfam" id="PF00004">
    <property type="entry name" value="AAA"/>
    <property type="match status" value="1"/>
</dbReference>
<dbReference type="Pfam" id="PF08542">
    <property type="entry name" value="Rep_fac_C"/>
    <property type="match status" value="1"/>
</dbReference>
<dbReference type="SMART" id="SM00382">
    <property type="entry name" value="AAA"/>
    <property type="match status" value="1"/>
</dbReference>
<dbReference type="SUPFAM" id="SSF52540">
    <property type="entry name" value="P-loop containing nucleoside triphosphate hydrolases"/>
    <property type="match status" value="1"/>
</dbReference>
<dbReference type="SUPFAM" id="SSF48019">
    <property type="entry name" value="post-AAA+ oligomerization domain-like"/>
    <property type="match status" value="1"/>
</dbReference>
<accession>Q05B83</accession>
<comment type="function">
    <text evidence="1">Subunit of the replication factor C (RFC) complex which acts during elongation of primed DNA templates by DNA polymerases delta and epsilon, and is necessary for ATP-dependent loading of proliferating cell nuclear antigen (PCNA) onto primed DNA (By similarity). This subunit binds ATP (By similarity).</text>
</comment>
<comment type="subunit">
    <text evidence="1">Subunit of the RFC complex, an heteropentameric complex consisting of a large subunit RFC1 and four small subunits RFC2, RFC3, RFC4 and RFC5; the RFC complex interacts with PCNA. Forms an heterotetrameric complex with RFC3, RFC4 and RFC5; this complex has ATPase activity but is not stimulated by PCNA. The heterotetramer of subunits RFC2, RFC3, RFC4 and RFC5 interacts with RAD17. RFC2 also interacts with PRKAR1A; the complex may be involved in cell survival. Interacts with DDX11.</text>
</comment>
<comment type="subcellular location">
    <subcellularLocation>
        <location evidence="4">Nucleus</location>
    </subcellularLocation>
</comment>
<comment type="similarity">
    <text evidence="4">Belongs to the activator 1 small subunits family.</text>
</comment>
<sequence>MEAQDSGGGTGECGAQDAAPGPSKAPGSAGHYELPWVEKYRPVKLNEIVGNEDTVSRLEVFAREGNVPNIIIAGPPGTGKTTSILCLARALLGPALKDAVLELNASNDRGIDVVRNKIKMFAQQKVTLPKGRHKIIILDEADSMTDGAQQALRRTMEIYSKTTRFALACNASDKIIEPIQSRCAVLRYTKLTDMQILARLLSVIEKEKVQYTDDGLEAIIFTAQGDMRQALNNLQSTYSGFGFINSENVFKVCDEPHPLLVKEMIQHCVSADIDEAYKILAHLWHLGYSPEDIIGNIFRVCKTFQMAEYLKLEFIKEIGYTHMKIAEGVNSLLQMAGLLARLCQKTMAPVAS</sequence>
<feature type="chain" id="PRO_0000330461" description="Replication factor C subunit 2">
    <location>
        <begin position="1"/>
        <end position="352"/>
    </location>
</feature>
<feature type="region of interest" description="Disordered" evidence="3">
    <location>
        <begin position="1"/>
        <end position="30"/>
    </location>
</feature>
<feature type="compositionally biased region" description="Gly residues" evidence="3">
    <location>
        <begin position="1"/>
        <end position="12"/>
    </location>
</feature>
<feature type="compositionally biased region" description="Low complexity" evidence="3">
    <location>
        <begin position="18"/>
        <end position="30"/>
    </location>
</feature>
<feature type="binding site" evidence="2">
    <location>
        <begin position="74"/>
        <end position="81"/>
    </location>
    <ligand>
        <name>ATP</name>
        <dbReference type="ChEBI" id="CHEBI:30616"/>
    </ligand>
</feature>
<feature type="modified residue" description="N-acetylmethionine" evidence="1">
    <location>
        <position position="1"/>
    </location>
</feature>
<feature type="modified residue" description="Phosphoserine" evidence="1">
    <location>
        <position position="28"/>
    </location>
</feature>
<feature type="modified residue" description="N6-acetyllysine" evidence="1">
    <location>
        <position position="161"/>
    </location>
</feature>
<feature type="modified residue" description="N6-acetyllysine" evidence="1">
    <location>
        <position position="302"/>
    </location>
</feature>
<gene>
    <name type="primary">RFC2</name>
</gene>
<evidence type="ECO:0000250" key="1">
    <source>
        <dbReference type="UniProtKB" id="P35250"/>
    </source>
</evidence>
<evidence type="ECO:0000255" key="2"/>
<evidence type="ECO:0000256" key="3">
    <source>
        <dbReference type="SAM" id="MobiDB-lite"/>
    </source>
</evidence>
<evidence type="ECO:0000305" key="4"/>